<name>RL17_PHOLL</name>
<comment type="subunit">
    <text evidence="1">Part of the 50S ribosomal subunit. Contacts protein L32.</text>
</comment>
<comment type="similarity">
    <text evidence="1">Belongs to the bacterial ribosomal protein bL17 family.</text>
</comment>
<sequence>MRHRKSGRQLNRNSSHRQAMFRNMAGSLVRHEIIKTTLPKAKELRRVVEPLITLAKIDSVANRRLAFARTRDNEIVAKLFNELGPRFASRAGGYTRILKCGFRAGDNAPMAYIELVDRATEPQTEVATAE</sequence>
<proteinExistence type="inferred from homology"/>
<accession>Q7MYH6</accession>
<dbReference type="EMBL" id="BX571874">
    <property type="protein sequence ID" value="CAE17073.1"/>
    <property type="molecule type" value="Genomic_DNA"/>
</dbReference>
<dbReference type="RefSeq" id="WP_011148771.1">
    <property type="nucleotide sequence ID" value="NC_005126.1"/>
</dbReference>
<dbReference type="SMR" id="Q7MYH6"/>
<dbReference type="STRING" id="243265.plu4701"/>
<dbReference type="GeneID" id="48850925"/>
<dbReference type="KEGG" id="plu:plu4701"/>
<dbReference type="eggNOG" id="COG0203">
    <property type="taxonomic scope" value="Bacteria"/>
</dbReference>
<dbReference type="HOGENOM" id="CLU_074407_2_0_6"/>
<dbReference type="OrthoDB" id="9809073at2"/>
<dbReference type="Proteomes" id="UP000002514">
    <property type="component" value="Chromosome"/>
</dbReference>
<dbReference type="GO" id="GO:0022625">
    <property type="term" value="C:cytosolic large ribosomal subunit"/>
    <property type="evidence" value="ECO:0007669"/>
    <property type="project" value="TreeGrafter"/>
</dbReference>
<dbReference type="GO" id="GO:0003735">
    <property type="term" value="F:structural constituent of ribosome"/>
    <property type="evidence" value="ECO:0007669"/>
    <property type="project" value="InterPro"/>
</dbReference>
<dbReference type="GO" id="GO:0006412">
    <property type="term" value="P:translation"/>
    <property type="evidence" value="ECO:0007669"/>
    <property type="project" value="UniProtKB-UniRule"/>
</dbReference>
<dbReference type="FunFam" id="3.90.1030.10:FF:000001">
    <property type="entry name" value="50S ribosomal protein L17"/>
    <property type="match status" value="1"/>
</dbReference>
<dbReference type="Gene3D" id="3.90.1030.10">
    <property type="entry name" value="Ribosomal protein L17"/>
    <property type="match status" value="1"/>
</dbReference>
<dbReference type="HAMAP" id="MF_01368">
    <property type="entry name" value="Ribosomal_bL17"/>
    <property type="match status" value="1"/>
</dbReference>
<dbReference type="InterPro" id="IPR000456">
    <property type="entry name" value="Ribosomal_bL17"/>
</dbReference>
<dbReference type="InterPro" id="IPR047859">
    <property type="entry name" value="Ribosomal_bL17_CS"/>
</dbReference>
<dbReference type="InterPro" id="IPR036373">
    <property type="entry name" value="Ribosomal_bL17_sf"/>
</dbReference>
<dbReference type="NCBIfam" id="TIGR00059">
    <property type="entry name" value="L17"/>
    <property type="match status" value="1"/>
</dbReference>
<dbReference type="PANTHER" id="PTHR14413:SF16">
    <property type="entry name" value="LARGE RIBOSOMAL SUBUNIT PROTEIN BL17M"/>
    <property type="match status" value="1"/>
</dbReference>
<dbReference type="PANTHER" id="PTHR14413">
    <property type="entry name" value="RIBOSOMAL PROTEIN L17"/>
    <property type="match status" value="1"/>
</dbReference>
<dbReference type="Pfam" id="PF01196">
    <property type="entry name" value="Ribosomal_L17"/>
    <property type="match status" value="1"/>
</dbReference>
<dbReference type="SUPFAM" id="SSF64263">
    <property type="entry name" value="Prokaryotic ribosomal protein L17"/>
    <property type="match status" value="1"/>
</dbReference>
<dbReference type="PROSITE" id="PS01167">
    <property type="entry name" value="RIBOSOMAL_L17"/>
    <property type="match status" value="1"/>
</dbReference>
<protein>
    <recommendedName>
        <fullName evidence="1">Large ribosomal subunit protein bL17</fullName>
    </recommendedName>
    <alternativeName>
        <fullName evidence="2">50S ribosomal protein L17</fullName>
    </alternativeName>
</protein>
<evidence type="ECO:0000255" key="1">
    <source>
        <dbReference type="HAMAP-Rule" id="MF_01368"/>
    </source>
</evidence>
<evidence type="ECO:0000305" key="2"/>
<feature type="chain" id="PRO_0000267909" description="Large ribosomal subunit protein bL17">
    <location>
        <begin position="1"/>
        <end position="130"/>
    </location>
</feature>
<organism>
    <name type="scientific">Photorhabdus laumondii subsp. laumondii (strain DSM 15139 / CIP 105565 / TT01)</name>
    <name type="common">Photorhabdus luminescens subsp. laumondii</name>
    <dbReference type="NCBI Taxonomy" id="243265"/>
    <lineage>
        <taxon>Bacteria</taxon>
        <taxon>Pseudomonadati</taxon>
        <taxon>Pseudomonadota</taxon>
        <taxon>Gammaproteobacteria</taxon>
        <taxon>Enterobacterales</taxon>
        <taxon>Morganellaceae</taxon>
        <taxon>Photorhabdus</taxon>
    </lineage>
</organism>
<reference key="1">
    <citation type="journal article" date="2003" name="Nat. Biotechnol.">
        <title>The genome sequence of the entomopathogenic bacterium Photorhabdus luminescens.</title>
        <authorList>
            <person name="Duchaud E."/>
            <person name="Rusniok C."/>
            <person name="Frangeul L."/>
            <person name="Buchrieser C."/>
            <person name="Givaudan A."/>
            <person name="Taourit S."/>
            <person name="Bocs S."/>
            <person name="Boursaux-Eude C."/>
            <person name="Chandler M."/>
            <person name="Charles J.-F."/>
            <person name="Dassa E."/>
            <person name="Derose R."/>
            <person name="Derzelle S."/>
            <person name="Freyssinet G."/>
            <person name="Gaudriault S."/>
            <person name="Medigue C."/>
            <person name="Lanois A."/>
            <person name="Powell K."/>
            <person name="Siguier P."/>
            <person name="Vincent R."/>
            <person name="Wingate V."/>
            <person name="Zouine M."/>
            <person name="Glaser P."/>
            <person name="Boemare N."/>
            <person name="Danchin A."/>
            <person name="Kunst F."/>
        </authorList>
    </citation>
    <scope>NUCLEOTIDE SEQUENCE [LARGE SCALE GENOMIC DNA]</scope>
    <source>
        <strain>DSM 15139 / CIP 105565 / TT01</strain>
    </source>
</reference>
<keyword id="KW-1185">Reference proteome</keyword>
<keyword id="KW-0687">Ribonucleoprotein</keyword>
<keyword id="KW-0689">Ribosomal protein</keyword>
<gene>
    <name evidence="1" type="primary">rplQ</name>
    <name type="ordered locus">plu4701</name>
</gene>